<feature type="chain" id="PRO_0000066295" description="Uncharacterized protein in lpd-3 5'region">
    <location>
        <begin position="1"/>
        <end position="142" status="greater than"/>
    </location>
</feature>
<feature type="non-terminal residue">
    <location>
        <position position="142"/>
    </location>
</feature>
<protein>
    <recommendedName>
        <fullName>Uncharacterized protein in lpd-3 5'region</fullName>
    </recommendedName>
    <alternativeName>
        <fullName>ORF1</fullName>
    </alternativeName>
</protein>
<dbReference type="EMBL" id="X55704">
    <property type="protein sequence ID" value="CAA39232.1"/>
    <property type="molecule type" value="Genomic_DNA"/>
</dbReference>
<dbReference type="eggNOG" id="ENOG50300GG">
    <property type="taxonomic scope" value="Bacteria"/>
</dbReference>
<dbReference type="InterPro" id="IPR022061">
    <property type="entry name" value="DUF3617"/>
</dbReference>
<dbReference type="Pfam" id="PF12276">
    <property type="entry name" value="DUF3617"/>
    <property type="match status" value="1"/>
</dbReference>
<name>YLP1_PSEPU</name>
<proteinExistence type="predicted"/>
<organism>
    <name type="scientific">Pseudomonas putida</name>
    <name type="common">Arthrobacter siderocapsulatus</name>
    <dbReference type="NCBI Taxonomy" id="303"/>
    <lineage>
        <taxon>Bacteria</taxon>
        <taxon>Pseudomonadati</taxon>
        <taxon>Pseudomonadota</taxon>
        <taxon>Gammaproteobacteria</taxon>
        <taxon>Pseudomonadales</taxon>
        <taxon>Pseudomonadaceae</taxon>
        <taxon>Pseudomonas</taxon>
    </lineage>
</organism>
<accession>P31047</accession>
<reference key="1">
    <citation type="submission" date="1992-08" db="EMBL/GenBank/DDBJ databases">
        <authorList>
            <person name="Lorenz D."/>
            <person name="Sokatch J.R."/>
        </authorList>
    </citation>
    <scope>NUCLEOTIDE SEQUENCE [GENOMIC DNA]</scope>
    <source>
        <strain>G2</strain>
    </source>
</reference>
<sequence length="142" mass="15449">MKIRLPLLALALGMSSPLVHAQMLQPGLWELTTSNMQVDGKPLPDMAFMLGQLKNLPPEQRAMMEGVLAKQGVTVGGNGVRSCLTPEQVATNDIPLQDPKSGCTQKITDRTGNVWKFQFSCPKAQGSGQATFLSDRELTCRH</sequence>